<keyword id="KW-0150">Chloroplast</keyword>
<keyword id="KW-0240">DNA-directed RNA polymerase</keyword>
<keyword id="KW-0548">Nucleotidyltransferase</keyword>
<keyword id="KW-0934">Plastid</keyword>
<keyword id="KW-0804">Transcription</keyword>
<keyword id="KW-0808">Transferase</keyword>
<organism>
    <name type="scientific">Agrostis stolonifera</name>
    <name type="common">Creeping bentgrass</name>
    <dbReference type="NCBI Taxonomy" id="63632"/>
    <lineage>
        <taxon>Eukaryota</taxon>
        <taxon>Viridiplantae</taxon>
        <taxon>Streptophyta</taxon>
        <taxon>Embryophyta</taxon>
        <taxon>Tracheophyta</taxon>
        <taxon>Spermatophyta</taxon>
        <taxon>Magnoliopsida</taxon>
        <taxon>Liliopsida</taxon>
        <taxon>Poales</taxon>
        <taxon>Poaceae</taxon>
        <taxon>BOP clade</taxon>
        <taxon>Pooideae</taxon>
        <taxon>Poodae</taxon>
        <taxon>Poeae</taxon>
        <taxon>Poeae Chloroplast Group 1 (Aveneae type)</taxon>
        <taxon>Agrostidodinae</taxon>
        <taxon>Agrostidinae</taxon>
        <taxon>Agrostis</taxon>
    </lineage>
</organism>
<gene>
    <name evidence="1" type="primary">rpoB</name>
</gene>
<protein>
    <recommendedName>
        <fullName evidence="1">DNA-directed RNA polymerase subunit beta</fullName>
        <ecNumber evidence="1">2.7.7.6</ecNumber>
    </recommendedName>
    <alternativeName>
        <fullName evidence="1">PEP</fullName>
    </alternativeName>
    <alternativeName>
        <fullName evidence="1">Plastid-encoded RNA polymerase subunit beta</fullName>
        <shortName evidence="1">RNA polymerase subunit beta</shortName>
    </alternativeName>
</protein>
<proteinExistence type="inferred from homology"/>
<geneLocation type="chloroplast"/>
<accession>A1E9Z8</accession>
<dbReference type="EC" id="2.7.7.6" evidence="1"/>
<dbReference type="EMBL" id="EF115543">
    <property type="protein sequence ID" value="ABK79570.1"/>
    <property type="molecule type" value="Genomic_DNA"/>
</dbReference>
<dbReference type="RefSeq" id="YP_874726.1">
    <property type="nucleotide sequence ID" value="NC_008591.1"/>
</dbReference>
<dbReference type="SMR" id="A1E9Z8"/>
<dbReference type="GeneID" id="4524944"/>
<dbReference type="GO" id="GO:0009507">
    <property type="term" value="C:chloroplast"/>
    <property type="evidence" value="ECO:0007669"/>
    <property type="project" value="UniProtKB-SubCell"/>
</dbReference>
<dbReference type="GO" id="GO:0000428">
    <property type="term" value="C:DNA-directed RNA polymerase complex"/>
    <property type="evidence" value="ECO:0007669"/>
    <property type="project" value="UniProtKB-KW"/>
</dbReference>
<dbReference type="GO" id="GO:0005739">
    <property type="term" value="C:mitochondrion"/>
    <property type="evidence" value="ECO:0007669"/>
    <property type="project" value="GOC"/>
</dbReference>
<dbReference type="GO" id="GO:0003677">
    <property type="term" value="F:DNA binding"/>
    <property type="evidence" value="ECO:0007669"/>
    <property type="project" value="UniProtKB-UniRule"/>
</dbReference>
<dbReference type="GO" id="GO:0003899">
    <property type="term" value="F:DNA-directed RNA polymerase activity"/>
    <property type="evidence" value="ECO:0007669"/>
    <property type="project" value="UniProtKB-UniRule"/>
</dbReference>
<dbReference type="GO" id="GO:0032549">
    <property type="term" value="F:ribonucleoside binding"/>
    <property type="evidence" value="ECO:0007669"/>
    <property type="project" value="InterPro"/>
</dbReference>
<dbReference type="GO" id="GO:0006351">
    <property type="term" value="P:DNA-templated transcription"/>
    <property type="evidence" value="ECO:0007669"/>
    <property type="project" value="UniProtKB-UniRule"/>
</dbReference>
<dbReference type="CDD" id="cd00653">
    <property type="entry name" value="RNA_pol_B_RPB2"/>
    <property type="match status" value="1"/>
</dbReference>
<dbReference type="Gene3D" id="2.40.50.100">
    <property type="match status" value="1"/>
</dbReference>
<dbReference type="Gene3D" id="2.40.50.150">
    <property type="match status" value="1"/>
</dbReference>
<dbReference type="Gene3D" id="3.90.1100.10">
    <property type="match status" value="1"/>
</dbReference>
<dbReference type="Gene3D" id="2.30.150.10">
    <property type="entry name" value="DNA-directed RNA polymerase, beta subunit, external 1 domain"/>
    <property type="match status" value="1"/>
</dbReference>
<dbReference type="Gene3D" id="2.40.270.10">
    <property type="entry name" value="DNA-directed RNA polymerase, subunit 2, domain 6"/>
    <property type="match status" value="1"/>
</dbReference>
<dbReference type="Gene3D" id="3.90.1800.10">
    <property type="entry name" value="RNA polymerase alpha subunit dimerisation domain"/>
    <property type="match status" value="1"/>
</dbReference>
<dbReference type="Gene3D" id="3.90.1110.10">
    <property type="entry name" value="RNA polymerase Rpb2, domain 2"/>
    <property type="match status" value="1"/>
</dbReference>
<dbReference type="HAMAP" id="MF_01321">
    <property type="entry name" value="RNApol_bact_RpoB"/>
    <property type="match status" value="1"/>
</dbReference>
<dbReference type="InterPro" id="IPR042107">
    <property type="entry name" value="DNA-dir_RNA_pol_bsu_ext_1_sf"/>
</dbReference>
<dbReference type="InterPro" id="IPR015712">
    <property type="entry name" value="DNA-dir_RNA_pol_su2"/>
</dbReference>
<dbReference type="InterPro" id="IPR007120">
    <property type="entry name" value="DNA-dir_RNAP_su2_dom"/>
</dbReference>
<dbReference type="InterPro" id="IPR037033">
    <property type="entry name" value="DNA-dir_RNAP_su2_hyb_sf"/>
</dbReference>
<dbReference type="InterPro" id="IPR010243">
    <property type="entry name" value="RNA_pol_bsu_bac"/>
</dbReference>
<dbReference type="InterPro" id="IPR007121">
    <property type="entry name" value="RNA_pol_bsu_CS"/>
</dbReference>
<dbReference type="InterPro" id="IPR007642">
    <property type="entry name" value="RNA_pol_Rpb2_2"/>
</dbReference>
<dbReference type="InterPro" id="IPR037034">
    <property type="entry name" value="RNA_pol_Rpb2_2_sf"/>
</dbReference>
<dbReference type="InterPro" id="IPR007645">
    <property type="entry name" value="RNA_pol_Rpb2_3"/>
</dbReference>
<dbReference type="InterPro" id="IPR007641">
    <property type="entry name" value="RNA_pol_Rpb2_7"/>
</dbReference>
<dbReference type="InterPro" id="IPR014724">
    <property type="entry name" value="RNA_pol_RPB2_OB-fold"/>
</dbReference>
<dbReference type="NCBIfam" id="NF001616">
    <property type="entry name" value="PRK00405.1"/>
    <property type="match status" value="1"/>
</dbReference>
<dbReference type="PANTHER" id="PTHR20856">
    <property type="entry name" value="DNA-DIRECTED RNA POLYMERASE I SUBUNIT 2"/>
    <property type="match status" value="1"/>
</dbReference>
<dbReference type="Pfam" id="PF04561">
    <property type="entry name" value="RNA_pol_Rpb2_2"/>
    <property type="match status" value="1"/>
</dbReference>
<dbReference type="Pfam" id="PF04565">
    <property type="entry name" value="RNA_pol_Rpb2_3"/>
    <property type="match status" value="1"/>
</dbReference>
<dbReference type="Pfam" id="PF00562">
    <property type="entry name" value="RNA_pol_Rpb2_6"/>
    <property type="match status" value="1"/>
</dbReference>
<dbReference type="Pfam" id="PF04560">
    <property type="entry name" value="RNA_pol_Rpb2_7"/>
    <property type="match status" value="1"/>
</dbReference>
<dbReference type="SUPFAM" id="SSF64484">
    <property type="entry name" value="beta and beta-prime subunits of DNA dependent RNA-polymerase"/>
    <property type="match status" value="1"/>
</dbReference>
<dbReference type="PROSITE" id="PS01166">
    <property type="entry name" value="RNA_POL_BETA"/>
    <property type="match status" value="1"/>
</dbReference>
<comment type="function">
    <text evidence="1">DNA-dependent RNA polymerase catalyzes the transcription of DNA into RNA using the four ribonucleoside triphosphates as substrates.</text>
</comment>
<comment type="catalytic activity">
    <reaction evidence="1">
        <text>RNA(n) + a ribonucleoside 5'-triphosphate = RNA(n+1) + diphosphate</text>
        <dbReference type="Rhea" id="RHEA:21248"/>
        <dbReference type="Rhea" id="RHEA-COMP:14527"/>
        <dbReference type="Rhea" id="RHEA-COMP:17342"/>
        <dbReference type="ChEBI" id="CHEBI:33019"/>
        <dbReference type="ChEBI" id="CHEBI:61557"/>
        <dbReference type="ChEBI" id="CHEBI:140395"/>
        <dbReference type="EC" id="2.7.7.6"/>
    </reaction>
</comment>
<comment type="subunit">
    <text evidence="1">In plastids the minimal PEP RNA polymerase catalytic core is composed of four subunits: alpha, beta, beta', and beta''. When a (nuclear-encoded) sigma factor is associated with the core the holoenzyme is formed, which can initiate transcription.</text>
</comment>
<comment type="subcellular location">
    <subcellularLocation>
        <location>Plastid</location>
        <location>Chloroplast</location>
    </subcellularLocation>
</comment>
<comment type="similarity">
    <text evidence="1">Belongs to the RNA polymerase beta chain family.</text>
</comment>
<sequence length="1076" mass="121590">MLRNGNEGMSTIPGFSQIQFEGFCRFINQALAEELDKFPIIKDPDHEIAFQLFAKGYQLLEPSIKERDAVYESLTYSSELYVSARLIFGFDVQKQTISIGNIPIMNSLGTFIINGIYRIVINQILLSPGIYYRSELDHKGISIYTGTIISDWGGRSELAIDKKERIWARVSRKQKISILVLSSAMGSNLREILDNVSYPEIFLSFPNAKEKKRIESKEKAILEFYQQFACVGGDLVFSESLCEELQKKFFQQKCELGRIGRRNMNRRLNLDIPQNNTFLLPRDVLAATDHLIGMKFGTGILDDDDMNHLKNKRIRSVADLLQDQFGLALGRLQHAVQKTIRRVFIRQSKPTPQTLVTPTSTSILLITTYETFFGTYPLSQVFDQTNPLTQTVHGRKVSCLGPGGLTGRTASFRSRDIHPSHYGRICPIDTSEGINVGLTGSLAIHARIDHLWGSIESPFYEISAEKAKKKKARQVVYLSPNRDEYYMIAAGNSLSLNQGIQEEQVVPARYRQEFLTIAWEQIHVRSIFPFQYFSIGGSLIPFIEHNDANRALMSSNMQRQAVPLSRSEKCIVGTGLERQTALDSRVSVIAEREGKIVSTDSHKILLSSSGKTISIPLVNHRRSNKNTCMHQKPRVPRGKSIKKGQILAEGAATVGGELALGKNVLVAYMPWEGYNFEDAVLISERLVYEDIYTSFHIRKYEIQTDTTSQGSAEKITKEIPHLEEHLLRNLDRNGVVRLGSWVETGDILVGKLTPQIASESSYIAEAGLLRAIFGLEVSTSKETSLKLPIGGRGRVIDVKWIQRDPLDIMVRVYILQKREIKVGDKVAGRHGNKGIISKILPRQDMPYLQDGTPVDMVFNPLGVPSRMNVGQIFESSLGLAGDLLKKHYRIAPFDERYEQEASRKLVFSELYEASKETKNPWVFEPEYPGKSRIFDGRTGDPFEQPVLIGKSYILKLIHQVDEKIHGRSTGPYSLVTQQPVRGRAKQGGQRVGEMEVWALEGFGVAHILQEILTYKSDHLIARQEILNATIWGKRIPNHEDPPESFRVLVRELRSLALELNHFLVSEKNFQINREEV</sequence>
<name>RPOB_AGRST</name>
<feature type="chain" id="PRO_0000276582" description="DNA-directed RNA polymerase subunit beta">
    <location>
        <begin position="1"/>
        <end position="1076"/>
    </location>
</feature>
<reference key="1">
    <citation type="journal article" date="2007" name="Theor. Appl. Genet.">
        <title>Complete chloroplast genome sequences of Hordeum vulgare, Sorghum bicolor and Agrostis stolonifera, and comparative analyses with other grass genomes.</title>
        <authorList>
            <person name="Saski C."/>
            <person name="Lee S.-B."/>
            <person name="Fjellheim S."/>
            <person name="Guda C."/>
            <person name="Jansen R.K."/>
            <person name="Luo H."/>
            <person name="Tomkins J."/>
            <person name="Rognli O.A."/>
            <person name="Daniell H."/>
            <person name="Clarke J.L."/>
        </authorList>
    </citation>
    <scope>NUCLEOTIDE SEQUENCE [LARGE SCALE GENOMIC DNA]</scope>
    <source>
        <strain>cv. Penn A-4</strain>
    </source>
</reference>
<evidence type="ECO:0000255" key="1">
    <source>
        <dbReference type="HAMAP-Rule" id="MF_01321"/>
    </source>
</evidence>